<reference evidence="5" key="1">
    <citation type="journal article" date="2009" name="BMC Evol. Biol.">
        <title>A proteomic approach for studying insect phylogeny: CAPA peptides of ancient insect taxa (Dictyoptera, Blattoptera) as a test case.</title>
        <authorList>
            <person name="Roth S."/>
            <person name="Fromm B."/>
            <person name="Gaede G."/>
            <person name="Predel R."/>
        </authorList>
    </citation>
    <scope>PROTEIN SEQUENCE</scope>
    <scope>AMIDATION AT LEU-17</scope>
    <source>
        <tissue evidence="3">Abdominal perisympathetic organs</tissue>
    </source>
</reference>
<feature type="peptide" id="PRO_0000378714" description="Pyrokinin-5" evidence="3">
    <location>
        <begin position="1"/>
        <end position="17"/>
    </location>
</feature>
<feature type="modified residue" description="Leucine amide" evidence="3">
    <location>
        <position position="17"/>
    </location>
</feature>
<organism>
    <name type="scientific">Perisphaeria cf. substylifera (strain SR-2005)</name>
    <name type="common">Cockroach</name>
    <dbReference type="NCBI Taxonomy" id="348760"/>
    <lineage>
        <taxon>Eukaryota</taxon>
        <taxon>Metazoa</taxon>
        <taxon>Ecdysozoa</taxon>
        <taxon>Arthropoda</taxon>
        <taxon>Hexapoda</taxon>
        <taxon>Insecta</taxon>
        <taxon>Pterygota</taxon>
        <taxon>Neoptera</taxon>
        <taxon>Polyneoptera</taxon>
        <taxon>Dictyoptera</taxon>
        <taxon>Blattodea</taxon>
        <taxon>Blaberoidea</taxon>
        <taxon>Blaberidae</taxon>
        <taxon>Perisphaerinae</taxon>
        <taxon>Perisphaeria</taxon>
    </lineage>
</organism>
<dbReference type="GO" id="GO:0005576">
    <property type="term" value="C:extracellular region"/>
    <property type="evidence" value="ECO:0007669"/>
    <property type="project" value="UniProtKB-SubCell"/>
</dbReference>
<dbReference type="GO" id="GO:0005184">
    <property type="term" value="F:neuropeptide hormone activity"/>
    <property type="evidence" value="ECO:0007669"/>
    <property type="project" value="InterPro"/>
</dbReference>
<dbReference type="GO" id="GO:0007218">
    <property type="term" value="P:neuropeptide signaling pathway"/>
    <property type="evidence" value="ECO:0007669"/>
    <property type="project" value="UniProtKB-KW"/>
</dbReference>
<dbReference type="InterPro" id="IPR001484">
    <property type="entry name" value="Pyrokinin_CS"/>
</dbReference>
<dbReference type="PROSITE" id="PS00539">
    <property type="entry name" value="PYROKININ"/>
    <property type="match status" value="1"/>
</dbReference>
<keyword id="KW-0027">Amidation</keyword>
<keyword id="KW-0903">Direct protein sequencing</keyword>
<keyword id="KW-0527">Neuropeptide</keyword>
<keyword id="KW-0964">Secreted</keyword>
<accession>P85730</accession>
<proteinExistence type="evidence at protein level"/>
<evidence type="ECO:0000250" key="1">
    <source>
        <dbReference type="UniProtKB" id="P82617"/>
    </source>
</evidence>
<evidence type="ECO:0000255" key="2"/>
<evidence type="ECO:0000269" key="3">
    <source>
    </source>
</evidence>
<evidence type="ECO:0000303" key="4">
    <source>
    </source>
</evidence>
<evidence type="ECO:0000305" key="5"/>
<sequence length="17" mass="1782">SGETSGEGNGMWFGPRL</sequence>
<comment type="function">
    <text evidence="1">Myoactive.</text>
</comment>
<comment type="subcellular location">
    <subcellularLocation>
        <location evidence="5">Secreted</location>
    </subcellularLocation>
</comment>
<comment type="similarity">
    <text evidence="2">Belongs to the pyrokinin family.</text>
</comment>
<protein>
    <recommendedName>
        <fullName evidence="1">Pyrokinin-5</fullName>
    </recommendedName>
    <alternativeName>
        <fullName evidence="1">FXPRL-amide</fullName>
    </alternativeName>
    <alternativeName>
        <fullName evidence="4">PerSu-Capa-PK</fullName>
    </alternativeName>
</protein>
<name>PPK5_PERSR</name>